<organism>
    <name type="scientific">Oryza sativa subsp. indica</name>
    <name type="common">Rice</name>
    <dbReference type="NCBI Taxonomy" id="39946"/>
    <lineage>
        <taxon>Eukaryota</taxon>
        <taxon>Viridiplantae</taxon>
        <taxon>Streptophyta</taxon>
        <taxon>Embryophyta</taxon>
        <taxon>Tracheophyta</taxon>
        <taxon>Spermatophyta</taxon>
        <taxon>Magnoliopsida</taxon>
        <taxon>Liliopsida</taxon>
        <taxon>Poales</taxon>
        <taxon>Poaceae</taxon>
        <taxon>BOP clade</taxon>
        <taxon>Oryzoideae</taxon>
        <taxon>Oryzeae</taxon>
        <taxon>Oryzinae</taxon>
        <taxon>Oryza</taxon>
        <taxon>Oryza sativa</taxon>
    </lineage>
</organism>
<name>LISC1_ORYSI</name>
<evidence type="ECO:0000255" key="1">
    <source>
        <dbReference type="HAMAP-Rule" id="MF_03129"/>
    </source>
</evidence>
<evidence type="ECO:0000255" key="2">
    <source>
        <dbReference type="PROSITE-ProRule" id="PRU01266"/>
    </source>
</evidence>
<evidence type="ECO:0000256" key="3">
    <source>
        <dbReference type="SAM" id="MobiDB-lite"/>
    </source>
</evidence>
<evidence type="ECO:0000305" key="4"/>
<sequence>MMQSSLARPLPRPPIRPACGNPVCRSRPGSVSVARCRAEAAPPAPAPAARRAAGPYTGRDPEVKKPAWLRQRAAQGEKYARLRESIGELKLNTVCVEAQCPNIGECWNGGGGAGGEGDGIATATIMVLGDTCTRGCRFCAVKTSNKPPPPDPLEPLNTALAVASWGVDYVVLTSVDRDDLPDGGSSHFAQTVRALKELKPGILVECLTSDFRGDLEAVSALANSGLDVFAHNIETVRSLQRIVRDPRAGYDQSLAVLKHAKSCKEGMITKSSIMLGLGETDEEVKQAMIDLRAIGVDILTLGQYLQPTERHLTVREYVTPEKFQFWKEYGESVGFRYVASGPLVRSSYRAGELFVQNLVRNNKPKLPASS</sequence>
<keyword id="KW-0004">4Fe-4S</keyword>
<keyword id="KW-0150">Chloroplast</keyword>
<keyword id="KW-0408">Iron</keyword>
<keyword id="KW-0411">Iron-sulfur</keyword>
<keyword id="KW-0479">Metal-binding</keyword>
<keyword id="KW-0934">Plastid</keyword>
<keyword id="KW-1185">Reference proteome</keyword>
<keyword id="KW-0949">S-adenosyl-L-methionine</keyword>
<keyword id="KW-0808">Transferase</keyword>
<keyword id="KW-0809">Transit peptide</keyword>
<gene>
    <name evidence="1" type="primary">LIP1P-1</name>
    <name type="ORF">OsI_03888</name>
</gene>
<comment type="function">
    <text evidence="1">Catalyzes the radical-mediated insertion of two sulfur atoms into the C-6 and C-8 positions of the octanoyl moiety bound to the lipoyl domains of lipoate-dependent enzymes, thereby converting the octanoylated domains into lipoylated derivatives.</text>
</comment>
<comment type="catalytic activity">
    <reaction evidence="1">
        <text>[[Fe-S] cluster scaffold protein carrying a second [4Fe-4S](2+) cluster] + N(6)-octanoyl-L-lysyl-[protein] + 2 oxidized [2Fe-2S]-[ferredoxin] + 2 S-adenosyl-L-methionine + 4 H(+) = [[Fe-S] cluster scaffold protein] + N(6)-[(R)-dihydrolipoyl]-L-lysyl-[protein] + 4 Fe(3+) + 2 hydrogen sulfide + 2 5'-deoxyadenosine + 2 L-methionine + 2 reduced [2Fe-2S]-[ferredoxin]</text>
        <dbReference type="Rhea" id="RHEA:16585"/>
        <dbReference type="Rhea" id="RHEA-COMP:9928"/>
        <dbReference type="Rhea" id="RHEA-COMP:10000"/>
        <dbReference type="Rhea" id="RHEA-COMP:10001"/>
        <dbReference type="Rhea" id="RHEA-COMP:10475"/>
        <dbReference type="Rhea" id="RHEA-COMP:14568"/>
        <dbReference type="Rhea" id="RHEA-COMP:14569"/>
        <dbReference type="ChEBI" id="CHEBI:15378"/>
        <dbReference type="ChEBI" id="CHEBI:17319"/>
        <dbReference type="ChEBI" id="CHEBI:29034"/>
        <dbReference type="ChEBI" id="CHEBI:29919"/>
        <dbReference type="ChEBI" id="CHEBI:33722"/>
        <dbReference type="ChEBI" id="CHEBI:33737"/>
        <dbReference type="ChEBI" id="CHEBI:33738"/>
        <dbReference type="ChEBI" id="CHEBI:57844"/>
        <dbReference type="ChEBI" id="CHEBI:59789"/>
        <dbReference type="ChEBI" id="CHEBI:78809"/>
        <dbReference type="ChEBI" id="CHEBI:83100"/>
        <dbReference type="EC" id="2.8.1.8"/>
    </reaction>
</comment>
<comment type="cofactor">
    <cofactor evidence="1">
        <name>[4Fe-4S] cluster</name>
        <dbReference type="ChEBI" id="CHEBI:49883"/>
    </cofactor>
    <text evidence="1">Binds 2 [4Fe-4S] clusters per subunit. One cluster is coordinated with 3 cysteines and an exchangeable S-adenosyl-L-methionine.</text>
</comment>
<comment type="pathway">
    <text evidence="1">Protein modification; protein lipoylation via endogenous pathway; protein N(6)-(lipoyl)lysine from octanoyl-[acyl-carrier-protein]: step 2/2.</text>
</comment>
<comment type="subcellular location">
    <subcellularLocation>
        <location evidence="1">Plastid</location>
        <location evidence="1">Chloroplast</location>
    </subcellularLocation>
</comment>
<comment type="similarity">
    <text evidence="1">Belongs to the radical SAM superfamily. Lipoyl synthase family.</text>
</comment>
<comment type="sequence caution" evidence="4">
    <conflict type="erroneous gene model prediction">
        <sequence resource="EMBL-CDS" id="EEC71548"/>
    </conflict>
</comment>
<reference key="1">
    <citation type="journal article" date="2005" name="PLoS Biol.">
        <title>The genomes of Oryza sativa: a history of duplications.</title>
        <authorList>
            <person name="Yu J."/>
            <person name="Wang J."/>
            <person name="Lin W."/>
            <person name="Li S."/>
            <person name="Li H."/>
            <person name="Zhou J."/>
            <person name="Ni P."/>
            <person name="Dong W."/>
            <person name="Hu S."/>
            <person name="Zeng C."/>
            <person name="Zhang J."/>
            <person name="Zhang Y."/>
            <person name="Li R."/>
            <person name="Xu Z."/>
            <person name="Li S."/>
            <person name="Li X."/>
            <person name="Zheng H."/>
            <person name="Cong L."/>
            <person name="Lin L."/>
            <person name="Yin J."/>
            <person name="Geng J."/>
            <person name="Li G."/>
            <person name="Shi J."/>
            <person name="Liu J."/>
            <person name="Lv H."/>
            <person name="Li J."/>
            <person name="Wang J."/>
            <person name="Deng Y."/>
            <person name="Ran L."/>
            <person name="Shi X."/>
            <person name="Wang X."/>
            <person name="Wu Q."/>
            <person name="Li C."/>
            <person name="Ren X."/>
            <person name="Wang J."/>
            <person name="Wang X."/>
            <person name="Li D."/>
            <person name="Liu D."/>
            <person name="Zhang X."/>
            <person name="Ji Z."/>
            <person name="Zhao W."/>
            <person name="Sun Y."/>
            <person name="Zhang Z."/>
            <person name="Bao J."/>
            <person name="Han Y."/>
            <person name="Dong L."/>
            <person name="Ji J."/>
            <person name="Chen P."/>
            <person name="Wu S."/>
            <person name="Liu J."/>
            <person name="Xiao Y."/>
            <person name="Bu D."/>
            <person name="Tan J."/>
            <person name="Yang L."/>
            <person name="Ye C."/>
            <person name="Zhang J."/>
            <person name="Xu J."/>
            <person name="Zhou Y."/>
            <person name="Yu Y."/>
            <person name="Zhang B."/>
            <person name="Zhuang S."/>
            <person name="Wei H."/>
            <person name="Liu B."/>
            <person name="Lei M."/>
            <person name="Yu H."/>
            <person name="Li Y."/>
            <person name="Xu H."/>
            <person name="Wei S."/>
            <person name="He X."/>
            <person name="Fang L."/>
            <person name="Zhang Z."/>
            <person name="Zhang Y."/>
            <person name="Huang X."/>
            <person name="Su Z."/>
            <person name="Tong W."/>
            <person name="Li J."/>
            <person name="Tong Z."/>
            <person name="Li S."/>
            <person name="Ye J."/>
            <person name="Wang L."/>
            <person name="Fang L."/>
            <person name="Lei T."/>
            <person name="Chen C.-S."/>
            <person name="Chen H.-C."/>
            <person name="Xu Z."/>
            <person name="Li H."/>
            <person name="Huang H."/>
            <person name="Zhang F."/>
            <person name="Xu H."/>
            <person name="Li N."/>
            <person name="Zhao C."/>
            <person name="Li S."/>
            <person name="Dong L."/>
            <person name="Huang Y."/>
            <person name="Li L."/>
            <person name="Xi Y."/>
            <person name="Qi Q."/>
            <person name="Li W."/>
            <person name="Zhang B."/>
            <person name="Hu W."/>
            <person name="Zhang Y."/>
            <person name="Tian X."/>
            <person name="Jiao Y."/>
            <person name="Liang X."/>
            <person name="Jin J."/>
            <person name="Gao L."/>
            <person name="Zheng W."/>
            <person name="Hao B."/>
            <person name="Liu S.-M."/>
            <person name="Wang W."/>
            <person name="Yuan L."/>
            <person name="Cao M."/>
            <person name="McDermott J."/>
            <person name="Samudrala R."/>
            <person name="Wang J."/>
            <person name="Wong G.K.-S."/>
            <person name="Yang H."/>
        </authorList>
    </citation>
    <scope>NUCLEOTIDE SEQUENCE [LARGE SCALE GENOMIC DNA]</scope>
    <source>
        <strain>cv. 93-11</strain>
    </source>
</reference>
<accession>B8AA76</accession>
<protein>
    <recommendedName>
        <fullName>Lipoyl synthase 1, chloroplastic</fullName>
        <ecNumber evidence="1">2.8.1.8</ecNumber>
    </recommendedName>
    <alternativeName>
        <fullName evidence="1">Lipoate synthase 1</fullName>
        <shortName evidence="1">LS 1</shortName>
        <shortName evidence="1">Lip-syn 1</shortName>
    </alternativeName>
    <alternativeName>
        <fullName evidence="1">Lipoate synthase, plastidial 1</fullName>
        <shortName evidence="1">LIP1p 1</shortName>
    </alternativeName>
    <alternativeName>
        <fullName evidence="1">Lipoic acid synthase 1</fullName>
    </alternativeName>
</protein>
<proteinExistence type="inferred from homology"/>
<dbReference type="EC" id="2.8.1.8" evidence="1"/>
<dbReference type="EMBL" id="CM000126">
    <property type="protein sequence ID" value="EEC71548.1"/>
    <property type="status" value="ALT_SEQ"/>
    <property type="molecule type" value="Genomic_DNA"/>
</dbReference>
<dbReference type="SMR" id="B8AA76"/>
<dbReference type="STRING" id="39946.B8AA76"/>
<dbReference type="EnsemblPlants" id="OsGoSa_01g0034280.01">
    <property type="protein sequence ID" value="OsGoSa_01g0034280.01"/>
    <property type="gene ID" value="OsGoSa_01g0034280"/>
</dbReference>
<dbReference type="EnsemblPlants" id="OsIR64_01g0033830.01">
    <property type="protein sequence ID" value="OsIR64_01g0033830.01"/>
    <property type="gene ID" value="OsIR64_01g0033830"/>
</dbReference>
<dbReference type="EnsemblPlants" id="OsKYG_01g0034030.01">
    <property type="protein sequence ID" value="OsKYG_01g0034030.01"/>
    <property type="gene ID" value="OsKYG_01g0034030"/>
</dbReference>
<dbReference type="EnsemblPlants" id="OsLima_01g0033970.01">
    <property type="protein sequence ID" value="OsLima_01g0033970.01"/>
    <property type="gene ID" value="OsLima_01g0033970"/>
</dbReference>
<dbReference type="EnsemblPlants" id="OsMH63_01G034790_01">
    <property type="protein sequence ID" value="OsMH63_01G034790_01"/>
    <property type="gene ID" value="OsMH63_01G034790"/>
</dbReference>
<dbReference type="EnsemblPlants" id="OsPr106_01g0034080.01">
    <property type="protein sequence ID" value="OsPr106_01g0034080.01"/>
    <property type="gene ID" value="OsPr106_01g0034080"/>
</dbReference>
<dbReference type="EnsemblPlants" id="OsZS97_01G034000_01">
    <property type="protein sequence ID" value="OsZS97_01G034000_01"/>
    <property type="gene ID" value="OsZS97_01G034000"/>
</dbReference>
<dbReference type="Gramene" id="OsGoSa_01g0034280.01">
    <property type="protein sequence ID" value="OsGoSa_01g0034280.01"/>
    <property type="gene ID" value="OsGoSa_01g0034280"/>
</dbReference>
<dbReference type="Gramene" id="OsIR64_01g0033830.01">
    <property type="protein sequence ID" value="OsIR64_01g0033830.01"/>
    <property type="gene ID" value="OsIR64_01g0033830"/>
</dbReference>
<dbReference type="Gramene" id="OsKYG_01g0034030.01">
    <property type="protein sequence ID" value="OsKYG_01g0034030.01"/>
    <property type="gene ID" value="OsKYG_01g0034030"/>
</dbReference>
<dbReference type="Gramene" id="OsLima_01g0033970.01">
    <property type="protein sequence ID" value="OsLima_01g0033970.01"/>
    <property type="gene ID" value="OsLima_01g0033970"/>
</dbReference>
<dbReference type="Gramene" id="OsMH63_01G034790_01">
    <property type="protein sequence ID" value="OsMH63_01G034790_01"/>
    <property type="gene ID" value="OsMH63_01G034790"/>
</dbReference>
<dbReference type="Gramene" id="OsPr106_01g0034080.01">
    <property type="protein sequence ID" value="OsPr106_01g0034080.01"/>
    <property type="gene ID" value="OsPr106_01g0034080"/>
</dbReference>
<dbReference type="Gramene" id="OsZS97_01G034000_01">
    <property type="protein sequence ID" value="OsZS97_01G034000_01"/>
    <property type="gene ID" value="OsZS97_01G034000"/>
</dbReference>
<dbReference type="HOGENOM" id="CLU_033144_2_0_1"/>
<dbReference type="OrthoDB" id="3231at2759"/>
<dbReference type="UniPathway" id="UPA00538">
    <property type="reaction ID" value="UER00593"/>
</dbReference>
<dbReference type="Proteomes" id="UP000007015">
    <property type="component" value="Chromosome 1"/>
</dbReference>
<dbReference type="GO" id="GO:0009507">
    <property type="term" value="C:chloroplast"/>
    <property type="evidence" value="ECO:0007669"/>
    <property type="project" value="UniProtKB-SubCell"/>
</dbReference>
<dbReference type="GO" id="GO:0005739">
    <property type="term" value="C:mitochondrion"/>
    <property type="evidence" value="ECO:0007669"/>
    <property type="project" value="TreeGrafter"/>
</dbReference>
<dbReference type="GO" id="GO:0051539">
    <property type="term" value="F:4 iron, 4 sulfur cluster binding"/>
    <property type="evidence" value="ECO:0007669"/>
    <property type="project" value="UniProtKB-UniRule"/>
</dbReference>
<dbReference type="GO" id="GO:0016992">
    <property type="term" value="F:lipoate synthase activity"/>
    <property type="evidence" value="ECO:0007669"/>
    <property type="project" value="UniProtKB-UniRule"/>
</dbReference>
<dbReference type="GO" id="GO:0046872">
    <property type="term" value="F:metal ion binding"/>
    <property type="evidence" value="ECO:0007669"/>
    <property type="project" value="UniProtKB-KW"/>
</dbReference>
<dbReference type="CDD" id="cd01335">
    <property type="entry name" value="Radical_SAM"/>
    <property type="match status" value="1"/>
</dbReference>
<dbReference type="FunFam" id="3.20.20.70:FF:000036">
    <property type="entry name" value="Lipoyl synthase, mitochondrial"/>
    <property type="match status" value="1"/>
</dbReference>
<dbReference type="Gene3D" id="3.20.20.70">
    <property type="entry name" value="Aldolase class I"/>
    <property type="match status" value="1"/>
</dbReference>
<dbReference type="HAMAP" id="MF_00206">
    <property type="entry name" value="Lipoyl_synth"/>
    <property type="match status" value="1"/>
</dbReference>
<dbReference type="HAMAP" id="MF_03129">
    <property type="entry name" value="Lipoyl_synth_plantC"/>
    <property type="match status" value="1"/>
</dbReference>
<dbReference type="InterPro" id="IPR013785">
    <property type="entry name" value="Aldolase_TIM"/>
</dbReference>
<dbReference type="InterPro" id="IPR006638">
    <property type="entry name" value="Elp3/MiaA/NifB-like_rSAM"/>
</dbReference>
<dbReference type="InterPro" id="IPR003698">
    <property type="entry name" value="Lipoyl_synth"/>
</dbReference>
<dbReference type="InterPro" id="IPR027526">
    <property type="entry name" value="Lipoyl_synth_chlpt"/>
</dbReference>
<dbReference type="InterPro" id="IPR007197">
    <property type="entry name" value="rSAM"/>
</dbReference>
<dbReference type="NCBIfam" id="TIGR00510">
    <property type="entry name" value="lipA"/>
    <property type="match status" value="1"/>
</dbReference>
<dbReference type="NCBIfam" id="NF004019">
    <property type="entry name" value="PRK05481.1"/>
    <property type="match status" value="1"/>
</dbReference>
<dbReference type="NCBIfam" id="NF009544">
    <property type="entry name" value="PRK12928.1"/>
    <property type="match status" value="1"/>
</dbReference>
<dbReference type="PANTHER" id="PTHR10949">
    <property type="entry name" value="LIPOYL SYNTHASE"/>
    <property type="match status" value="1"/>
</dbReference>
<dbReference type="PANTHER" id="PTHR10949:SF31">
    <property type="entry name" value="LIPOYL SYNTHASE 1, CHLOROPLASTIC"/>
    <property type="match status" value="1"/>
</dbReference>
<dbReference type="Pfam" id="PF04055">
    <property type="entry name" value="Radical_SAM"/>
    <property type="match status" value="1"/>
</dbReference>
<dbReference type="PIRSF" id="PIRSF005963">
    <property type="entry name" value="Lipoyl_synth"/>
    <property type="match status" value="1"/>
</dbReference>
<dbReference type="SFLD" id="SFLDF00271">
    <property type="entry name" value="lipoyl_synthase"/>
    <property type="match status" value="1"/>
</dbReference>
<dbReference type="SFLD" id="SFLDG01058">
    <property type="entry name" value="lipoyl_synthase_like"/>
    <property type="match status" value="1"/>
</dbReference>
<dbReference type="SMART" id="SM00729">
    <property type="entry name" value="Elp3"/>
    <property type="match status" value="1"/>
</dbReference>
<dbReference type="SUPFAM" id="SSF102114">
    <property type="entry name" value="Radical SAM enzymes"/>
    <property type="match status" value="1"/>
</dbReference>
<dbReference type="PROSITE" id="PS51918">
    <property type="entry name" value="RADICAL_SAM"/>
    <property type="match status" value="1"/>
</dbReference>
<feature type="transit peptide" description="Chloroplast" evidence="1">
    <location>
        <begin position="1"/>
        <end position="37"/>
    </location>
</feature>
<feature type="chain" id="PRO_0000398863" description="Lipoyl synthase 1, chloroplastic">
    <location>
        <begin position="38"/>
        <end position="370"/>
    </location>
</feature>
<feature type="domain" description="Radical SAM core" evidence="2">
    <location>
        <begin position="115"/>
        <end position="336"/>
    </location>
</feature>
<feature type="region of interest" description="Disordered" evidence="3">
    <location>
        <begin position="1"/>
        <end position="25"/>
    </location>
</feature>
<feature type="region of interest" description="Disordered" evidence="3">
    <location>
        <begin position="39"/>
        <end position="67"/>
    </location>
</feature>
<feature type="binding site" evidence="1">
    <location>
        <position position="95"/>
    </location>
    <ligand>
        <name>[4Fe-4S] cluster</name>
        <dbReference type="ChEBI" id="CHEBI:49883"/>
        <label>1</label>
    </ligand>
</feature>
<feature type="binding site" evidence="1">
    <location>
        <position position="100"/>
    </location>
    <ligand>
        <name>[4Fe-4S] cluster</name>
        <dbReference type="ChEBI" id="CHEBI:49883"/>
        <label>1</label>
    </ligand>
</feature>
<feature type="binding site" evidence="1">
    <location>
        <position position="106"/>
    </location>
    <ligand>
        <name>[4Fe-4S] cluster</name>
        <dbReference type="ChEBI" id="CHEBI:49883"/>
        <label>1</label>
    </ligand>
</feature>
<feature type="binding site" evidence="1">
    <location>
        <position position="132"/>
    </location>
    <ligand>
        <name>[4Fe-4S] cluster</name>
        <dbReference type="ChEBI" id="CHEBI:49883"/>
        <label>2</label>
        <note>4Fe-4S-S-AdoMet</note>
    </ligand>
</feature>
<feature type="binding site" evidence="1">
    <location>
        <position position="136"/>
    </location>
    <ligand>
        <name>[4Fe-4S] cluster</name>
        <dbReference type="ChEBI" id="CHEBI:49883"/>
        <label>2</label>
        <note>4Fe-4S-S-AdoMet</note>
    </ligand>
</feature>
<feature type="binding site" evidence="1">
    <location>
        <position position="139"/>
    </location>
    <ligand>
        <name>[4Fe-4S] cluster</name>
        <dbReference type="ChEBI" id="CHEBI:49883"/>
        <label>2</label>
        <note>4Fe-4S-S-AdoMet</note>
    </ligand>
</feature>
<feature type="binding site" evidence="1">
    <location>
        <position position="347"/>
    </location>
    <ligand>
        <name>[4Fe-4S] cluster</name>
        <dbReference type="ChEBI" id="CHEBI:49883"/>
        <label>1</label>
    </ligand>
</feature>